<organism>
    <name type="scientific">Pseudomonas fluorescens</name>
    <dbReference type="NCBI Taxonomy" id="294"/>
    <lineage>
        <taxon>Bacteria</taxon>
        <taxon>Pseudomonadati</taxon>
        <taxon>Pseudomonadota</taxon>
        <taxon>Gammaproteobacteria</taxon>
        <taxon>Pseudomonadales</taxon>
        <taxon>Pseudomonadaceae</taxon>
        <taxon>Pseudomonas</taxon>
    </lineage>
</organism>
<accession>P37726</accession>
<gene>
    <name type="primary">oprF</name>
</gene>
<protein>
    <recommendedName>
        <fullName>Outer membrane porin F</fullName>
    </recommendedName>
    <alternativeName>
        <fullName>Root adhesin</fullName>
    </alternativeName>
</protein>
<proteinExistence type="evidence at protein level"/>
<comment type="function">
    <text>Known to stabilize the outer membrane.</text>
</comment>
<comment type="subcellular location">
    <subcellularLocation>
        <location>Cell outer membrane</location>
        <topology>Multi-pass membrane protein</topology>
    </subcellularLocation>
</comment>
<comment type="similarity">
    <text evidence="3">Belongs to the outer membrane OOP (TC 1.B.6) superfamily.</text>
</comment>
<name>PORF_PSEFL</name>
<evidence type="ECO:0000255" key="1">
    <source>
        <dbReference type="PROSITE-ProRule" id="PRU00473"/>
    </source>
</evidence>
<evidence type="ECO:0000269" key="2">
    <source>
    </source>
</evidence>
<evidence type="ECO:0000305" key="3"/>
<sequence>MKLKNTLGFAIGSIIAATSFGALAQGQGAVEGELFYKKQYNDSVKHIEDGFNPGARIGYFLTDDLSLNLSYDKTNHTRSNDGTGSQKIGGDTSSLTAQYHFGQAGVDSLRPYVEGGFGHQSRGNVKADGHSGRDQSTLAIAGAGVKYYFTNNVYARAGVEADYALDNGKWDYSALVGLGVNFGGNAGAAAPAPTPAPAPEPTPEPEAPVAQVVRVELDVKFDFDKSVVKPNSYGDVKNLADFMAQYPATNVEVAGHTDSIGPDAYNQKLSQRRADRVKQVLVKDGVAPSRITAVGYGESRPVADNATEAGRAVNRRVEASVEAQAQ</sequence>
<reference key="1">
    <citation type="journal article" date="1992" name="Mol. Gen. Genet.">
        <title>Homology of the root adhesin of Pseudomonas fluorescens OE 28.3 with porin F of P. aeruginosa and P. syringae.</title>
        <authorList>
            <person name="de Mot R."/>
            <person name="Proost P."/>
            <person name="van Damme J."/>
            <person name="Vanderleyden J."/>
        </authorList>
    </citation>
    <scope>NUCLEOTIDE SEQUENCE [GENOMIC DNA]</scope>
    <scope>PROTEIN SEQUENCE OF 25-74 AND 238-258</scope>
    <source>
        <strain>OE 28.3</strain>
    </source>
</reference>
<dbReference type="EMBL" id="AF115334">
    <property type="protein sequence ID" value="AAD45981.1"/>
    <property type="molecule type" value="Genomic_DNA"/>
</dbReference>
<dbReference type="PIR" id="S20494">
    <property type="entry name" value="S20494"/>
</dbReference>
<dbReference type="SMR" id="P37726"/>
<dbReference type="eggNOG" id="COG2885">
    <property type="taxonomic scope" value="Bacteria"/>
</dbReference>
<dbReference type="eggNOG" id="COG3047">
    <property type="taxonomic scope" value="Bacteria"/>
</dbReference>
<dbReference type="GO" id="GO:0009279">
    <property type="term" value="C:cell outer membrane"/>
    <property type="evidence" value="ECO:0007669"/>
    <property type="project" value="UniProtKB-SubCell"/>
</dbReference>
<dbReference type="GO" id="GO:0046930">
    <property type="term" value="C:pore complex"/>
    <property type="evidence" value="ECO:0007669"/>
    <property type="project" value="UniProtKB-KW"/>
</dbReference>
<dbReference type="GO" id="GO:0015288">
    <property type="term" value="F:porin activity"/>
    <property type="evidence" value="ECO:0007669"/>
    <property type="project" value="UniProtKB-KW"/>
</dbReference>
<dbReference type="GO" id="GO:0006811">
    <property type="term" value="P:monoatomic ion transport"/>
    <property type="evidence" value="ECO:0007669"/>
    <property type="project" value="UniProtKB-KW"/>
</dbReference>
<dbReference type="CDD" id="cd07185">
    <property type="entry name" value="OmpA_C-like"/>
    <property type="match status" value="1"/>
</dbReference>
<dbReference type="Gene3D" id="2.40.160.20">
    <property type="match status" value="1"/>
</dbReference>
<dbReference type="Gene3D" id="3.30.1330.60">
    <property type="entry name" value="OmpA-like domain"/>
    <property type="match status" value="1"/>
</dbReference>
<dbReference type="InterPro" id="IPR050330">
    <property type="entry name" value="Bact_OuterMem_StrucFunc"/>
</dbReference>
<dbReference type="InterPro" id="IPR011250">
    <property type="entry name" value="OMP/PagP_b-brl"/>
</dbReference>
<dbReference type="InterPro" id="IPR006664">
    <property type="entry name" value="OMP_bac"/>
</dbReference>
<dbReference type="InterPro" id="IPR006665">
    <property type="entry name" value="OmpA-like"/>
</dbReference>
<dbReference type="InterPro" id="IPR006690">
    <property type="entry name" value="OMPA-like_CS"/>
</dbReference>
<dbReference type="InterPro" id="IPR036737">
    <property type="entry name" value="OmpA-like_sf"/>
</dbReference>
<dbReference type="InterPro" id="IPR008722">
    <property type="entry name" value="OprF_membrane_N"/>
</dbReference>
<dbReference type="PANTHER" id="PTHR30329:SF21">
    <property type="entry name" value="LIPOPROTEIN YIAD-RELATED"/>
    <property type="match status" value="1"/>
</dbReference>
<dbReference type="PANTHER" id="PTHR30329">
    <property type="entry name" value="STATOR ELEMENT OF FLAGELLAR MOTOR COMPLEX"/>
    <property type="match status" value="1"/>
</dbReference>
<dbReference type="Pfam" id="PF00691">
    <property type="entry name" value="OmpA"/>
    <property type="match status" value="1"/>
</dbReference>
<dbReference type="Pfam" id="PF05736">
    <property type="entry name" value="OprF"/>
    <property type="match status" value="1"/>
</dbReference>
<dbReference type="PRINTS" id="PR01021">
    <property type="entry name" value="OMPADOMAIN"/>
</dbReference>
<dbReference type="SUPFAM" id="SSF56925">
    <property type="entry name" value="OMPA-like"/>
    <property type="match status" value="1"/>
</dbReference>
<dbReference type="SUPFAM" id="SSF103088">
    <property type="entry name" value="OmpA-like"/>
    <property type="match status" value="1"/>
</dbReference>
<dbReference type="PROSITE" id="PS01068">
    <property type="entry name" value="OMPA_1"/>
    <property type="match status" value="1"/>
</dbReference>
<dbReference type="PROSITE" id="PS51123">
    <property type="entry name" value="OMPA_2"/>
    <property type="match status" value="1"/>
</dbReference>
<feature type="signal peptide" evidence="2">
    <location>
        <begin position="1"/>
        <end position="24"/>
    </location>
</feature>
<feature type="chain" id="PRO_0000020116" description="Outer membrane porin F">
    <location>
        <begin position="25"/>
        <end position="326"/>
    </location>
</feature>
<feature type="repeat" description="1">
    <location>
        <begin position="190"/>
        <end position="191"/>
    </location>
</feature>
<feature type="repeat" description="2">
    <location>
        <begin position="192"/>
        <end position="193"/>
    </location>
</feature>
<feature type="repeat" description="3">
    <location>
        <begin position="194"/>
        <end position="195"/>
    </location>
</feature>
<feature type="repeat" description="4">
    <location>
        <begin position="196"/>
        <end position="197"/>
    </location>
</feature>
<feature type="repeat" description="5">
    <location>
        <begin position="198"/>
        <end position="199"/>
    </location>
</feature>
<feature type="repeat" description="6">
    <location>
        <begin position="200"/>
        <end position="201"/>
    </location>
</feature>
<feature type="repeat" description="7">
    <location>
        <begin position="202"/>
        <end position="203"/>
    </location>
</feature>
<feature type="repeat" description="8">
    <location>
        <begin position="204"/>
        <end position="205"/>
    </location>
</feature>
<feature type="domain" description="OmpA-like" evidence="1">
    <location>
        <begin position="208"/>
        <end position="325"/>
    </location>
</feature>
<feature type="region of interest" description="8 X 2 AA tandem repeats of X-P">
    <location>
        <begin position="190"/>
        <end position="205"/>
    </location>
</feature>
<keyword id="KW-0998">Cell outer membrane</keyword>
<keyword id="KW-0903">Direct protein sequencing</keyword>
<keyword id="KW-0406">Ion transport</keyword>
<keyword id="KW-0472">Membrane</keyword>
<keyword id="KW-0626">Porin</keyword>
<keyword id="KW-0677">Repeat</keyword>
<keyword id="KW-0732">Signal</keyword>
<keyword id="KW-0812">Transmembrane</keyword>
<keyword id="KW-1134">Transmembrane beta strand</keyword>
<keyword id="KW-0813">Transport</keyword>